<proteinExistence type="evidence at protein level"/>
<comment type="function">
    <text>Involved in phosphonate degradation.</text>
</comment>
<comment type="catalytic activity">
    <reaction>
        <text>(2-aminoethyl)phosphonate + pyruvate = phosphonoacetaldehyde + L-alanine</text>
        <dbReference type="Rhea" id="RHEA:17021"/>
        <dbReference type="ChEBI" id="CHEBI:15361"/>
        <dbReference type="ChEBI" id="CHEBI:57418"/>
        <dbReference type="ChEBI" id="CHEBI:57972"/>
        <dbReference type="ChEBI" id="CHEBI:58383"/>
        <dbReference type="EC" id="2.6.1.37"/>
    </reaction>
</comment>
<comment type="cofactor">
    <cofactor evidence="3">
        <name>pyridoxal 5'-phosphate</name>
        <dbReference type="ChEBI" id="CHEBI:597326"/>
    </cofactor>
    <text evidence="3">Thr-243 of one partner binds the pyridoxal phosphate moiety of the other.</text>
</comment>
<comment type="biophysicochemical properties">
    <kinetics>
        <KM>1.11 mM for (2-aminoethyl)phosphonate (at 25 degrees Celsius, pH 8.5)</KM>
        <KM>0.15 mM for pyruvate (at 25 degrees Celsius, pH 8.5)</KM>
        <KM>0.09 mM for 2-phosphonoacetaldehyde (at 25 degrees Celsius, pH 8.5)</KM>
        <KM>1.4 mM for L-alanine (at 25 degrees Celsius, pH 8.5)</KM>
    </kinetics>
    <phDependence>
        <text>Optimum pH is 6.5-9.5 for phosphonoacetaldehyde formation, and 7.5-8.5 for 2-aminoethyl phosphonate formation.</text>
    </phDependence>
</comment>
<comment type="subunit">
    <text evidence="2 3">Homodimer.</text>
</comment>
<comment type="induction">
    <text evidence="4">Induced when inorganic phosphate is limiting; this is controlled by PhoB.</text>
</comment>
<comment type="miscellaneous">
    <text>Maps to a phosphate-starvation-inducible locus previously known as psiC.</text>
</comment>
<comment type="similarity">
    <text evidence="5">Belongs to the class-V pyridoxal-phosphate-dependent aminotransferase family. PhnW subfamily.</text>
</comment>
<comment type="caution">
    <text evidence="6">The crystal structure does not show the Schiff base that is expected to form between Lys-194 and the pyridoxal phosphate cofactor.</text>
</comment>
<protein>
    <recommendedName>
        <fullName>2-aminoethylphosphonate--pyruvate transaminase</fullName>
        <ecNumber>2.6.1.37</ecNumber>
    </recommendedName>
    <alternativeName>
        <fullName>2-aminoethylphosphonate aminotransferase</fullName>
    </alternativeName>
    <alternativeName>
        <fullName>AEP transaminase</fullName>
        <shortName>AEPT</shortName>
    </alternativeName>
</protein>
<keyword id="KW-0002">3D-structure</keyword>
<keyword id="KW-0032">Aminotransferase</keyword>
<keyword id="KW-0903">Direct protein sequencing</keyword>
<keyword id="KW-0663">Pyridoxal phosphate</keyword>
<keyword id="KW-0670">Pyruvate</keyword>
<keyword id="KW-1185">Reference proteome</keyword>
<keyword id="KW-0808">Transferase</keyword>
<dbReference type="EC" id="2.6.1.37"/>
<dbReference type="EMBL" id="U69493">
    <property type="protein sequence ID" value="AAB39642.1"/>
    <property type="molecule type" value="Genomic_DNA"/>
</dbReference>
<dbReference type="EMBL" id="AE006468">
    <property type="protein sequence ID" value="AAL19385.1"/>
    <property type="molecule type" value="Genomic_DNA"/>
</dbReference>
<dbReference type="PIR" id="T46947">
    <property type="entry name" value="T46947"/>
</dbReference>
<dbReference type="RefSeq" id="NP_459426.1">
    <property type="nucleotide sequence ID" value="NC_003197.2"/>
</dbReference>
<dbReference type="RefSeq" id="WP_000203955.1">
    <property type="nucleotide sequence ID" value="NC_003197.2"/>
</dbReference>
<dbReference type="PDB" id="1M32">
    <property type="method" value="X-ray"/>
    <property type="resolution" value="2.20 A"/>
    <property type="chains" value="A/B/C/D/E/F=2-367"/>
</dbReference>
<dbReference type="PDBsum" id="1M32"/>
<dbReference type="SMR" id="P96060"/>
<dbReference type="STRING" id="99287.STM0431"/>
<dbReference type="PaxDb" id="99287-STM0431"/>
<dbReference type="GeneID" id="1251950"/>
<dbReference type="KEGG" id="stm:STM0431"/>
<dbReference type="PATRIC" id="fig|99287.12.peg.460"/>
<dbReference type="HOGENOM" id="CLU_027686_3_1_6"/>
<dbReference type="OMA" id="IHCETST"/>
<dbReference type="PhylomeDB" id="P96060"/>
<dbReference type="BioCyc" id="SENT99287:STM0431-MONOMER"/>
<dbReference type="EvolutionaryTrace" id="P96060"/>
<dbReference type="Proteomes" id="UP000001014">
    <property type="component" value="Chromosome"/>
</dbReference>
<dbReference type="GO" id="GO:0047304">
    <property type="term" value="F:2-aminoethylphosphonate-pyruvate transaminase activity"/>
    <property type="evidence" value="ECO:0007669"/>
    <property type="project" value="UniProtKB-UniRule"/>
</dbReference>
<dbReference type="GO" id="GO:0019700">
    <property type="term" value="P:organic phosphonate catabolic process"/>
    <property type="evidence" value="ECO:0007669"/>
    <property type="project" value="InterPro"/>
</dbReference>
<dbReference type="Gene3D" id="3.90.1150.10">
    <property type="entry name" value="Aspartate Aminotransferase, domain 1"/>
    <property type="match status" value="1"/>
</dbReference>
<dbReference type="Gene3D" id="3.40.640.10">
    <property type="entry name" value="Type I PLP-dependent aspartate aminotransferase-like (Major domain)"/>
    <property type="match status" value="1"/>
</dbReference>
<dbReference type="HAMAP" id="MF_01376">
    <property type="entry name" value="PhnW_aminotrans_5"/>
    <property type="match status" value="1"/>
</dbReference>
<dbReference type="InterPro" id="IPR000192">
    <property type="entry name" value="Aminotrans_V_dom"/>
</dbReference>
<dbReference type="InterPro" id="IPR012703">
    <property type="entry name" value="NH2EtPonate_pyrv_transaminase"/>
</dbReference>
<dbReference type="InterPro" id="IPR015424">
    <property type="entry name" value="PyrdxlP-dep_Trfase"/>
</dbReference>
<dbReference type="InterPro" id="IPR015421">
    <property type="entry name" value="PyrdxlP-dep_Trfase_major"/>
</dbReference>
<dbReference type="InterPro" id="IPR015422">
    <property type="entry name" value="PyrdxlP-dep_Trfase_small"/>
</dbReference>
<dbReference type="InterPro" id="IPR024169">
    <property type="entry name" value="SP_NH2Trfase/AEP_transaminase"/>
</dbReference>
<dbReference type="NCBIfam" id="TIGR03301">
    <property type="entry name" value="PhnW-AepZ"/>
    <property type="match status" value="1"/>
</dbReference>
<dbReference type="NCBIfam" id="NF010006">
    <property type="entry name" value="PRK13479.1"/>
    <property type="match status" value="1"/>
</dbReference>
<dbReference type="NCBIfam" id="TIGR02326">
    <property type="entry name" value="transamin_PhnW"/>
    <property type="match status" value="1"/>
</dbReference>
<dbReference type="PANTHER" id="PTHR42778">
    <property type="entry name" value="2-AMINOETHYLPHOSPHONATE--PYRUVATE TRANSAMINASE"/>
    <property type="match status" value="1"/>
</dbReference>
<dbReference type="PANTHER" id="PTHR42778:SF1">
    <property type="entry name" value="2-AMINOETHYLPHOSPHONATE--PYRUVATE TRANSAMINASE"/>
    <property type="match status" value="1"/>
</dbReference>
<dbReference type="Pfam" id="PF00266">
    <property type="entry name" value="Aminotran_5"/>
    <property type="match status" value="1"/>
</dbReference>
<dbReference type="PIRSF" id="PIRSF000524">
    <property type="entry name" value="SPT"/>
    <property type="match status" value="1"/>
</dbReference>
<dbReference type="SUPFAM" id="SSF53383">
    <property type="entry name" value="PLP-dependent transferases"/>
    <property type="match status" value="1"/>
</dbReference>
<accession>P96060</accession>
<accession>Q7CR29</accession>
<gene>
    <name type="primary">phnW</name>
    <name type="ordered locus">STM0431</name>
</gene>
<organism>
    <name type="scientific">Salmonella typhimurium (strain LT2 / SGSC1412 / ATCC 700720)</name>
    <dbReference type="NCBI Taxonomy" id="99287"/>
    <lineage>
        <taxon>Bacteria</taxon>
        <taxon>Pseudomonadati</taxon>
        <taxon>Pseudomonadota</taxon>
        <taxon>Gammaproteobacteria</taxon>
        <taxon>Enterobacterales</taxon>
        <taxon>Enterobacteriaceae</taxon>
        <taxon>Salmonella</taxon>
    </lineage>
</organism>
<evidence type="ECO:0000255" key="1"/>
<evidence type="ECO:0000269" key="2">
    <source>
    </source>
</evidence>
<evidence type="ECO:0000269" key="3">
    <source>
    </source>
</evidence>
<evidence type="ECO:0000269" key="4">
    <source>
    </source>
</evidence>
<evidence type="ECO:0000305" key="5"/>
<evidence type="ECO:0000305" key="6">
    <source>
    </source>
</evidence>
<evidence type="ECO:0007829" key="7">
    <source>
        <dbReference type="PDB" id="1M32"/>
    </source>
</evidence>
<reference key="1">
    <citation type="submission" date="1996-09" db="EMBL/GenBank/DDBJ databases">
        <title>Molecular genetic analysis of the Salmonella typhimurium LT2 phnXWRSTUV locus required for 2-aminoethylphosphonate transport and metabolism.</title>
        <authorList>
            <person name="Metcalf W.W."/>
            <person name="Jiang W."/>
            <person name="Wanner B.L."/>
        </authorList>
    </citation>
    <scope>NUCLEOTIDE SEQUENCE [GENOMIC DNA]</scope>
    <source>
        <strain>LT2</strain>
    </source>
</reference>
<reference key="2">
    <citation type="journal article" date="2001" name="Nature">
        <title>Complete genome sequence of Salmonella enterica serovar Typhimurium LT2.</title>
        <authorList>
            <person name="McClelland M."/>
            <person name="Sanderson K.E."/>
            <person name="Spieth J."/>
            <person name="Clifton S.W."/>
            <person name="Latreille P."/>
            <person name="Courtney L."/>
            <person name="Porwollik S."/>
            <person name="Ali J."/>
            <person name="Dante M."/>
            <person name="Du F."/>
            <person name="Hou S."/>
            <person name="Layman D."/>
            <person name="Leonard S."/>
            <person name="Nguyen C."/>
            <person name="Scott K."/>
            <person name="Holmes A."/>
            <person name="Grewal N."/>
            <person name="Mulvaney E."/>
            <person name="Ryan E."/>
            <person name="Sun H."/>
            <person name="Florea L."/>
            <person name="Miller W."/>
            <person name="Stoneking T."/>
            <person name="Nhan M."/>
            <person name="Waterston R."/>
            <person name="Wilson R.K."/>
        </authorList>
    </citation>
    <scope>NUCLEOTIDE SEQUENCE [LARGE SCALE GENOMIC DNA]</scope>
    <source>
        <strain>LT2 / SGSC1412 / ATCC 700720</strain>
    </source>
</reference>
<reference key="3">
    <citation type="journal article" date="2002" name="J. Bacteriol.">
        <title>The 2-aminoethylphosphonate-specific transaminase of the 2-aminoethylphosphonate degradation pathway.</title>
        <authorList>
            <person name="Kim A.D."/>
            <person name="Baker A.S."/>
            <person name="Dunaway-Mariano D."/>
            <person name="Metcalf W.W."/>
            <person name="Wanner B.L."/>
            <person name="Martin B.M."/>
        </authorList>
    </citation>
    <scope>PROTEIN SEQUENCE OF 2-13</scope>
    <scope>SUBUNIT</scope>
    <scope>BIOPHYSICAL CHARACTERIZATION</scope>
    <scope>MUTAGENESIS OF ASP-168; LYS-194 AND ARG-340</scope>
    <source>
        <strain>LT2</strain>
    </source>
</reference>
<reference key="4">
    <citation type="journal article" date="1995" name="J. Bacteriol.">
        <title>Molecular cloning, mapping, and regulation of Pho regulon genes for phosphonate breakdown by the phosphonatase pathway of Salmonella typhimurium LT2.</title>
        <authorList>
            <person name="Jiang W."/>
            <person name="Metcalf W.W."/>
            <person name="Lee K.-S."/>
            <person name="Wanner B.L."/>
        </authorList>
    </citation>
    <scope>CLONING</scope>
    <scope>INDUCTION</scope>
    <source>
        <strain>LT2</strain>
    </source>
</reference>
<reference key="5">
    <citation type="journal article" date="2002" name="Biochemistry">
        <title>Degradation pathway of the phosphonate ciliatine: crystal structure of 2-aminoethylphosphonate transaminase.</title>
        <authorList>
            <person name="Chen C.C.H."/>
            <person name="Zhang H."/>
            <person name="Kim A.D."/>
            <person name="Howard A."/>
            <person name="Sheldrick G.M."/>
            <person name="Dunaway-Mariano D."/>
            <person name="Herzberg O."/>
        </authorList>
    </citation>
    <scope>X-RAY CRYSTALLOGRAPHY (2.2 ANGSTROMS) OF 2-367</scope>
    <scope>SUBUNIT</scope>
    <scope>COFACTOR</scope>
    <source>
        <strain>LT2</strain>
    </source>
</reference>
<name>PHNW_SALTY</name>
<sequence>MTSRNYLLLTPGPLTTSRTVKEAMLFDSCTWDDDYNIGVVEQIRQQLTALATASEGYTSVLLQGSGSYAVEAVLGSALGPQDKVLIVSNGAYGARMVEMAGLMGIAHHAYDCGEVARPDVQAIDAILNADPTISHIAMVHSETTTGMLNPIDEVGALAHRYGKTYIVDAMSSFGGIPMDIAALHIDYLISSANKCIQGVPGFAFVIAREQKLAACKGHSRSLSLDLYAQWRCMEDNHGKWRFTSPTHTVLAFAQALKELAKEGGVAARHQRYQQNQRSLVAGMRALGFNTLLDDELHSPIITAFYSPEDPQYRFSEFYRRLKEQGFVIYPGKVSQSDCFRIGNIGEVYAADITALLTAIRTAMYWTK</sequence>
<feature type="initiator methionine" description="Removed" evidence="2">
    <location>
        <position position="1"/>
    </location>
</feature>
<feature type="chain" id="PRO_0000286787" description="2-aminoethylphosphonate--pyruvate transaminase">
    <location>
        <begin position="2"/>
        <end position="367"/>
    </location>
</feature>
<feature type="binding site">
    <location>
        <begin position="65"/>
        <end position="67"/>
    </location>
    <ligand>
        <name>pyridoxal 5'-phosphate</name>
        <dbReference type="ChEBI" id="CHEBI:597326"/>
    </ligand>
</feature>
<feature type="binding site">
    <location>
        <position position="92"/>
    </location>
    <ligand>
        <name>pyridoxal 5'-phosphate</name>
        <dbReference type="ChEBI" id="CHEBI:597326"/>
    </ligand>
</feature>
<feature type="binding site">
    <location>
        <position position="143"/>
    </location>
    <ligand>
        <name>pyridoxal 5'-phosphate</name>
        <dbReference type="ChEBI" id="CHEBI:597326"/>
    </ligand>
</feature>
<feature type="binding site">
    <location>
        <position position="168"/>
    </location>
    <ligand>
        <name>pyridoxal 5'-phosphate</name>
        <dbReference type="ChEBI" id="CHEBI:597326"/>
    </ligand>
</feature>
<feature type="binding site">
    <location>
        <position position="243"/>
    </location>
    <ligand>
        <name>pyridoxal 5'-phosphate</name>
        <dbReference type="ChEBI" id="CHEBI:597326"/>
    </ligand>
</feature>
<feature type="modified residue" description="N6-(pyridoxal phosphate)lysine" evidence="1">
    <location>
        <position position="194"/>
    </location>
</feature>
<feature type="mutagenesis site" description="Loss of enzymatic activity." evidence="2">
    <original>D</original>
    <variation>A</variation>
    <location>
        <position position="168"/>
    </location>
</feature>
<feature type="mutagenesis site" description="Loss of enzymatic activity." evidence="2">
    <original>K</original>
    <variation>L</variation>
    <variation>R</variation>
    <location>
        <position position="194"/>
    </location>
</feature>
<feature type="mutagenesis site" description="Decreased affinity for all of the substrates." evidence="2">
    <original>R</original>
    <variation>A</variation>
    <variation>K</variation>
    <location>
        <position position="340"/>
    </location>
</feature>
<feature type="strand" evidence="7">
    <location>
        <begin position="10"/>
        <end position="13"/>
    </location>
</feature>
<feature type="helix" evidence="7">
    <location>
        <begin position="18"/>
        <end position="22"/>
    </location>
</feature>
<feature type="helix" evidence="7">
    <location>
        <begin position="33"/>
        <end position="36"/>
    </location>
</feature>
<feature type="turn" evidence="7">
    <location>
        <begin position="37"/>
        <end position="39"/>
    </location>
</feature>
<feature type="helix" evidence="7">
    <location>
        <begin position="40"/>
        <end position="51"/>
    </location>
</feature>
<feature type="strand" evidence="7">
    <location>
        <begin position="53"/>
        <end position="64"/>
    </location>
</feature>
<feature type="helix" evidence="7">
    <location>
        <begin position="66"/>
        <end position="76"/>
    </location>
</feature>
<feature type="strand" evidence="7">
    <location>
        <begin position="84"/>
        <end position="90"/>
    </location>
</feature>
<feature type="helix" evidence="7">
    <location>
        <begin position="91"/>
        <end position="103"/>
    </location>
</feature>
<feature type="strand" evidence="7">
    <location>
        <begin position="107"/>
        <end position="111"/>
    </location>
</feature>
<feature type="helix" evidence="7">
    <location>
        <begin position="120"/>
        <end position="129"/>
    </location>
</feature>
<feature type="strand" evidence="7">
    <location>
        <begin position="135"/>
        <end position="141"/>
    </location>
</feature>
<feature type="turn" evidence="7">
    <location>
        <begin position="143"/>
        <end position="145"/>
    </location>
</feature>
<feature type="helix" evidence="7">
    <location>
        <begin position="151"/>
        <end position="161"/>
    </location>
</feature>
<feature type="strand" evidence="7">
    <location>
        <begin position="164"/>
        <end position="168"/>
    </location>
</feature>
<feature type="turn" evidence="7">
    <location>
        <begin position="170"/>
        <end position="175"/>
    </location>
</feature>
<feature type="turn" evidence="7">
    <location>
        <begin position="180"/>
        <end position="184"/>
    </location>
</feature>
<feature type="strand" evidence="7">
    <location>
        <begin position="186"/>
        <end position="194"/>
    </location>
</feature>
<feature type="strand" evidence="7">
    <location>
        <begin position="200"/>
        <end position="208"/>
    </location>
</feature>
<feature type="helix" evidence="7">
    <location>
        <begin position="209"/>
        <end position="212"/>
    </location>
</feature>
<feature type="helix" evidence="7">
    <location>
        <begin position="226"/>
        <end position="235"/>
    </location>
</feature>
<feature type="turn" evidence="7">
    <location>
        <begin position="236"/>
        <end position="238"/>
    </location>
</feature>
<feature type="helix" evidence="7">
    <location>
        <begin position="246"/>
        <end position="262"/>
    </location>
</feature>
<feature type="helix" evidence="7">
    <location>
        <begin position="264"/>
        <end position="285"/>
    </location>
</feature>
<feature type="strand" evidence="7">
    <location>
        <begin position="290"/>
        <end position="292"/>
    </location>
</feature>
<feature type="helix" evidence="7">
    <location>
        <begin position="294"/>
        <end position="296"/>
    </location>
</feature>
<feature type="strand" evidence="7">
    <location>
        <begin position="299"/>
        <end position="305"/>
    </location>
</feature>
<feature type="helix" evidence="7">
    <location>
        <begin position="314"/>
        <end position="323"/>
    </location>
</feature>
<feature type="strand" evidence="7">
    <location>
        <begin position="334"/>
        <end position="336"/>
    </location>
</feature>
<feature type="strand" evidence="7">
    <location>
        <begin position="338"/>
        <end position="342"/>
    </location>
</feature>
<feature type="helix" evidence="7">
    <location>
        <begin position="349"/>
        <end position="362"/>
    </location>
</feature>